<sequence>MEQAPEDQGPQREPYNEWTIEILEELKREAVRHFPRPWLHDLGQHIYNNYGDTWEGVEAIIRILQQLLFIHFRIGCHHSRIGILRQRRGGNGASRS</sequence>
<organism>
    <name type="scientific">Human immunodeficiency virus type 1 group M subtype K (isolate 97ZR-EQTB11)</name>
    <name type="common">HIV-1</name>
    <dbReference type="NCBI Taxonomy" id="388907"/>
    <lineage>
        <taxon>Viruses</taxon>
        <taxon>Riboviria</taxon>
        <taxon>Pararnavirae</taxon>
        <taxon>Artverviricota</taxon>
        <taxon>Revtraviricetes</taxon>
        <taxon>Ortervirales</taxon>
        <taxon>Retroviridae</taxon>
        <taxon>Orthoretrovirinae</taxon>
        <taxon>Lentivirus</taxon>
        <taxon>Human immunodeficiency virus type 1</taxon>
    </lineage>
</organism>
<feature type="chain" id="PRO_0000246756" description="Protein Vpr">
    <location>
        <begin position="1"/>
        <end position="96"/>
    </location>
</feature>
<feature type="region of interest" description="Homooligomerization" evidence="1">
    <location>
        <begin position="1"/>
        <end position="42"/>
    </location>
</feature>
<feature type="modified residue" description="Phosphoserine; by host" evidence="1">
    <location>
        <position position="79"/>
    </location>
</feature>
<feature type="modified residue" description="Phosphoserine; by host" evidence="1">
    <location>
        <position position="94"/>
    </location>
</feature>
<feature type="modified residue" description="Phosphoserine; by host" evidence="1">
    <location>
        <position position="96"/>
    </location>
</feature>
<keyword id="KW-0010">Activator</keyword>
<keyword id="KW-0014">AIDS</keyword>
<keyword id="KW-0053">Apoptosis</keyword>
<keyword id="KW-0131">Cell cycle</keyword>
<keyword id="KW-1079">Host G2/M cell cycle arrest by virus</keyword>
<keyword id="KW-1048">Host nucleus</keyword>
<keyword id="KW-0945">Host-virus interaction</keyword>
<keyword id="KW-0407">Ion channel</keyword>
<keyword id="KW-0406">Ion transport</keyword>
<keyword id="KW-1121">Modulation of host cell cycle by virus</keyword>
<keyword id="KW-0597">Phosphoprotein</keyword>
<keyword id="KW-0804">Transcription</keyword>
<keyword id="KW-0805">Transcription regulation</keyword>
<keyword id="KW-0813">Transport</keyword>
<keyword id="KW-1163">Viral penetration into host nucleus</keyword>
<keyword id="KW-0946">Virion</keyword>
<keyword id="KW-1160">Virus entry into host cell</keyword>
<organismHost>
    <name type="scientific">Homo sapiens</name>
    <name type="common">Human</name>
    <dbReference type="NCBI Taxonomy" id="9606"/>
</organismHost>
<name>VPR_HV197</name>
<comment type="function">
    <text evidence="1">During virus replication, may deplete host UNG protein, and incude G2-M cell cycle arrest. Acts by targeting specific host proteins for degradation by the 26S proteasome, through association with the cellular CUL4A-DDB1 E3 ligase complex by direct interaction with host VPRPB/DCAF-1. Cell cycle arrest reportedly occurs within hours of infection and is not blocked by antiviral agents, suggesting that it is initiated by the VPR carried into the virion. Additionally, VPR induces apoptosis in a cell cycle dependent manner suggesting that these two effects are mechanistically linked. Detected in the serum and cerebrospinal fluid of AIDS patient, VPR may also induce cell death to bystander cells.</text>
</comment>
<comment type="function">
    <text evidence="1">During virus entry, plays a role in the transport of the viral pre-integration (PIC) complex to the host nucleus. This function is crucial for viral infection of non-dividing macrophages. May act directly at the nuclear pore complex, by binding nucleoporins phenylalanine-glycine (FG)-repeat regions.</text>
</comment>
<comment type="subunit">
    <text evidence="1">Homooligomer, may form homodimer. Interacts with p6-gag region of the Pr55 Gag precursor protein through a (Leu-X-X)4 motif near the C-terminus of the P6gag protein. Interacts with host UNG. May interact with host RAD23A/HHR23A. Interacts with host VPRBP/DCAF1, leading to hijack the CUL4A-RBX1-DDB1-DCAF1/VPRBP complex, mediating ubiquitination of host proteins such as TERT and ZGPAT and arrest of the cell cycle in G2 phase.</text>
</comment>
<comment type="subcellular location">
    <subcellularLocation>
        <location evidence="1">Virion</location>
    </subcellularLocation>
    <subcellularLocation>
        <location evidence="1">Host nucleus</location>
    </subcellularLocation>
    <subcellularLocation>
        <location evidence="1">Host extracellular space</location>
    </subcellularLocation>
    <text evidence="1">Incorporation into virion is dependent on p6 GAG sequences. Lacks a canonical nuclear localization signal, thus import into nucleus may function independently of the human importin pathway. Detected in high quantity in the serum and cerebrospinal fluid of AIDS patient.</text>
</comment>
<comment type="PTM">
    <text evidence="1">Phosphorylated on several residues by host. These phosphorylations regulate VPR activity for the nuclear import of the HIV-1 pre-integration complex.</text>
</comment>
<comment type="miscellaneous">
    <text evidence="1">HIV-1 lineages are divided in three main groups, M (for Major), O (for Outlier), and N (for New, or Non-M, Non-O). The vast majority of strains found worldwide belong to the group M. Group O seems to be endemic to and largely confined to Cameroon and neighboring countries in West Central Africa, where these viruses represent a small minority of HIV-1 strains. The group N is represented by a limited number of isolates from Cameroonian persons. The group M is further subdivided in 9 clades or subtypes (A to D, F to H, J and K).</text>
</comment>
<comment type="similarity">
    <text evidence="1">Belongs to the HIV-1 VPR protein family.</text>
</comment>
<proteinExistence type="inferred from homology"/>
<dbReference type="EMBL" id="AJ249235">
    <property type="status" value="NOT_ANNOTATED_CDS"/>
    <property type="molecule type" value="Genomic_RNA"/>
</dbReference>
<dbReference type="SMR" id="P0C1P3"/>
<dbReference type="Proteomes" id="UP000100183">
    <property type="component" value="Segment"/>
</dbReference>
<dbReference type="GO" id="GO:0043657">
    <property type="term" value="C:host cell"/>
    <property type="evidence" value="ECO:0007669"/>
    <property type="project" value="GOC"/>
</dbReference>
<dbReference type="GO" id="GO:0042025">
    <property type="term" value="C:host cell nucleus"/>
    <property type="evidence" value="ECO:0007669"/>
    <property type="project" value="UniProtKB-SubCell"/>
</dbReference>
<dbReference type="GO" id="GO:0043655">
    <property type="term" value="C:host extracellular space"/>
    <property type="evidence" value="ECO:0007669"/>
    <property type="project" value="UniProtKB-SubCell"/>
</dbReference>
<dbReference type="GO" id="GO:0044423">
    <property type="term" value="C:virion component"/>
    <property type="evidence" value="ECO:0007669"/>
    <property type="project" value="UniProtKB-UniRule"/>
</dbReference>
<dbReference type="GO" id="GO:0006351">
    <property type="term" value="P:DNA-templated transcription"/>
    <property type="evidence" value="ECO:0007669"/>
    <property type="project" value="UniProtKB-UniRule"/>
</dbReference>
<dbReference type="GO" id="GO:0034220">
    <property type="term" value="P:monoatomic ion transmembrane transport"/>
    <property type="evidence" value="ECO:0007669"/>
    <property type="project" value="UniProtKB-KW"/>
</dbReference>
<dbReference type="GO" id="GO:0051260">
    <property type="term" value="P:protein homooligomerization"/>
    <property type="evidence" value="ECO:0007669"/>
    <property type="project" value="UniProtKB-UniRule"/>
</dbReference>
<dbReference type="GO" id="GO:0006355">
    <property type="term" value="P:regulation of DNA-templated transcription"/>
    <property type="evidence" value="ECO:0007669"/>
    <property type="project" value="UniProtKB-UniRule"/>
</dbReference>
<dbReference type="GO" id="GO:0046718">
    <property type="term" value="P:symbiont entry into host cell"/>
    <property type="evidence" value="ECO:0007669"/>
    <property type="project" value="UniProtKB-KW"/>
</dbReference>
<dbReference type="GO" id="GO:0052151">
    <property type="term" value="P:symbiont-mediated activation of host apoptosis"/>
    <property type="evidence" value="ECO:0007669"/>
    <property type="project" value="UniProtKB-UniRule"/>
</dbReference>
<dbReference type="GO" id="GO:0039592">
    <property type="term" value="P:symbiont-mediated arrest of host cell cycle during G2/M transition"/>
    <property type="evidence" value="ECO:0007669"/>
    <property type="project" value="UniProtKB-UniRule"/>
</dbReference>
<dbReference type="GO" id="GO:0075732">
    <property type="term" value="P:viral penetration into host nucleus"/>
    <property type="evidence" value="ECO:0007669"/>
    <property type="project" value="UniProtKB-UniRule"/>
</dbReference>
<dbReference type="Gene3D" id="6.10.210.10">
    <property type="match status" value="1"/>
</dbReference>
<dbReference type="Gene3D" id="1.20.5.90">
    <property type="entry name" value="VpR/VpX protein, C-terminal domain"/>
    <property type="match status" value="1"/>
</dbReference>
<dbReference type="HAMAP" id="MF_04080">
    <property type="entry name" value="HIV_VPR"/>
    <property type="match status" value="1"/>
</dbReference>
<dbReference type="InterPro" id="IPR000012">
    <property type="entry name" value="RetroV_VpR/X"/>
</dbReference>
<dbReference type="Pfam" id="PF00522">
    <property type="entry name" value="VPR"/>
    <property type="match status" value="1"/>
</dbReference>
<dbReference type="PRINTS" id="PR00444">
    <property type="entry name" value="HIVVPRVPX"/>
</dbReference>
<accession>P0C1P3</accession>
<protein>
    <recommendedName>
        <fullName evidence="1">Protein Vpr</fullName>
    </recommendedName>
    <alternativeName>
        <fullName evidence="1">R ORF protein</fullName>
    </alternativeName>
    <alternativeName>
        <fullName evidence="1">Viral protein R</fullName>
    </alternativeName>
</protein>
<evidence type="ECO:0000255" key="1">
    <source>
        <dbReference type="HAMAP-Rule" id="MF_04080"/>
    </source>
</evidence>
<reference key="1">
    <citation type="journal article" date="2000" name="AIDS Res. Hum. Retroviruses">
        <title>Near-full-length genome sequencing of divergent African HIV type 1 subtype F viruses leads to the identification of a new HIV type 1 subtype designated K.</title>
        <authorList>
            <person name="Triques K."/>
            <person name="Bourgeois A."/>
            <person name="Vidale N."/>
            <person name="Mpoudi-Ngole E."/>
            <person name="Mulanga-Kabeya C."/>
            <person name="Nzilambi N."/>
            <person name="Torimiro N."/>
            <person name="Saman E."/>
            <person name="Delaporte E."/>
            <person name="Peeters M."/>
        </authorList>
    </citation>
    <scope>NUCLEOTIDE SEQUENCE [GENOMIC RNA]</scope>
</reference>
<gene>
    <name evidence="1" type="primary">vpr</name>
</gene>